<protein>
    <recommendedName>
        <fullName>Divinyl chlorophyllide a 8-vinyl-reductase, chloroplastic</fullName>
        <ecNumber evidence="4">1.3.1.75</ecNumber>
    </recommendedName>
</protein>
<name>DCVR_MAIZE</name>
<evidence type="ECO:0000250" key="1"/>
<evidence type="ECO:0000255" key="2"/>
<evidence type="ECO:0000256" key="3">
    <source>
        <dbReference type="SAM" id="MobiDB-lite"/>
    </source>
</evidence>
<evidence type="ECO:0000269" key="4">
    <source>
    </source>
</evidence>
<comment type="function">
    <text evidence="4">Catalyzes the conversion of divinyl chlorophyllide to monovinyl chlorophyllide. Reduces the 8-vinyl group of the tetrapyrrole to an ethyl group using NADPH as the reductant. Can use (3,8-divinyl)-chlorophyllide a (DV-Chlidea) &gt; (3,8-divinyl)-chlorophyll a (DV-Chla) &gt; (3,8-divinyl)-protochlorophyllide a (DV-Pchlidea) &gt; (3,8-divinyl)-magnesium-protoporphyrin IX monomethyl ester (DV-MPE) &gt; (3,8-divinyl)-magnesium-protoporphyrin IX (DV-Mg-Proto) as substrates.</text>
</comment>
<comment type="catalytic activity">
    <reaction evidence="4">
        <text>protochlorophyllide a + NADP(+) = 3,8-divinyl protochlorophyllide a + NADPH + H(+)</text>
        <dbReference type="Rhea" id="RHEA:48884"/>
        <dbReference type="ChEBI" id="CHEBI:15378"/>
        <dbReference type="ChEBI" id="CHEBI:57783"/>
        <dbReference type="ChEBI" id="CHEBI:58349"/>
        <dbReference type="ChEBI" id="CHEBI:58632"/>
        <dbReference type="ChEBI" id="CHEBI:83350"/>
        <dbReference type="EC" id="1.3.1.75"/>
    </reaction>
</comment>
<comment type="pathway">
    <text>Porphyrin-containing compound metabolism; chlorophyll biosynthesis.</text>
</comment>
<comment type="subcellular location">
    <subcellularLocation>
        <location evidence="1">Plastid</location>
        <location evidence="1">Chloroplast</location>
    </subcellularLocation>
</comment>
<feature type="transit peptide" description="Chloroplast" evidence="2">
    <location>
        <begin position="1"/>
        <end position="54"/>
    </location>
</feature>
<feature type="chain" id="PRO_0000422537" description="Divinyl chlorophyllide a 8-vinyl-reductase, chloroplastic">
    <location>
        <begin position="55"/>
        <end position="401"/>
    </location>
</feature>
<feature type="region of interest" description="Disordered" evidence="3">
    <location>
        <begin position="1"/>
        <end position="26"/>
    </location>
</feature>
<feature type="compositionally biased region" description="Polar residues" evidence="3">
    <location>
        <begin position="1"/>
        <end position="10"/>
    </location>
</feature>
<accession>B6SZW0</accession>
<reference key="1">
    <citation type="journal article" date="2009" name="Plant Mol. Biol.">
        <title>Insights into corn genes derived from large-scale cDNA sequencing.</title>
        <authorList>
            <person name="Alexandrov N.N."/>
            <person name="Brover V.V."/>
            <person name="Freidin S."/>
            <person name="Troukhan M.E."/>
            <person name="Tatarinova T.V."/>
            <person name="Zhang H."/>
            <person name="Swaller T.J."/>
            <person name="Lu Y.-P."/>
            <person name="Bouck J."/>
            <person name="Flavell R.B."/>
            <person name="Feldmann K.A."/>
        </authorList>
    </citation>
    <scope>NUCLEOTIDE SEQUENCE [LARGE SCALE MRNA]</scope>
</reference>
<reference key="2">
    <citation type="journal article" date="2013" name="Plant Physiol.">
        <title>One divinyl reductase reduces the 8-vinyl groups in various intermediates of chlorophyll biosynthesis in a given higher plant species, but the isozyme differs between species.</title>
        <authorList>
            <person name="Wang P."/>
            <person name="Wan C."/>
            <person name="Xu Z."/>
            <person name="Wang P."/>
            <person name="Wang W."/>
            <person name="Sun C."/>
            <person name="Ma X."/>
            <person name="Xiao Y."/>
            <person name="Zhu J."/>
            <person name="Gao X."/>
            <person name="Deng X."/>
        </authorList>
    </citation>
    <scope>FUNCTION</scope>
    <scope>CATALYTIC ACTIVITY</scope>
    <scope>BIOPHYSICOCHEMICAL PROPERTIES</scope>
</reference>
<gene>
    <name type="primary">DVR</name>
    <name type="synonym">PCB2</name>
</gene>
<proteinExistence type="evidence at protein level"/>
<dbReference type="EC" id="1.3.1.75" evidence="4"/>
<dbReference type="EMBL" id="EU958275">
    <property type="protein sequence ID" value="ACG30393.1"/>
    <property type="molecule type" value="mRNA"/>
</dbReference>
<dbReference type="RefSeq" id="NP_001148282.1">
    <property type="nucleotide sequence ID" value="NM_001154810.1"/>
</dbReference>
<dbReference type="SMR" id="B6SZW0"/>
<dbReference type="FunCoup" id="B6SZW0">
    <property type="interactions" value="872"/>
</dbReference>
<dbReference type="STRING" id="4577.B6SZW0"/>
<dbReference type="PaxDb" id="4577-GRMZM2G063048_P01"/>
<dbReference type="GeneID" id="100281890"/>
<dbReference type="KEGG" id="zma:100281890"/>
<dbReference type="eggNOG" id="KOG1203">
    <property type="taxonomic scope" value="Eukaryota"/>
</dbReference>
<dbReference type="InParanoid" id="B6SZW0"/>
<dbReference type="OrthoDB" id="419598at2759"/>
<dbReference type="BRENDA" id="1.3.1.75">
    <property type="organism ID" value="6752"/>
</dbReference>
<dbReference type="UniPathway" id="UPA00668"/>
<dbReference type="Proteomes" id="UP000007305">
    <property type="component" value="Unplaced"/>
</dbReference>
<dbReference type="ExpressionAtlas" id="B6SZW0">
    <property type="expression patterns" value="baseline and differential"/>
</dbReference>
<dbReference type="GO" id="GO:0009507">
    <property type="term" value="C:chloroplast"/>
    <property type="evidence" value="ECO:0007669"/>
    <property type="project" value="UniProtKB-SubCell"/>
</dbReference>
<dbReference type="GO" id="GO:0033728">
    <property type="term" value="F:3,8-divinyl protochlorophyllide a 8-vinyl-reductase (NADPH) activity"/>
    <property type="evidence" value="ECO:0007669"/>
    <property type="project" value="UniProtKB-EC"/>
</dbReference>
<dbReference type="GO" id="GO:0015995">
    <property type="term" value="P:chlorophyll biosynthetic process"/>
    <property type="evidence" value="ECO:0007669"/>
    <property type="project" value="UniProtKB-UniPathway"/>
</dbReference>
<dbReference type="CDD" id="cd05243">
    <property type="entry name" value="SDR_a5"/>
    <property type="match status" value="1"/>
</dbReference>
<dbReference type="Gene3D" id="3.40.50.720">
    <property type="entry name" value="NAD(P)-binding Rossmann-like Domain"/>
    <property type="match status" value="1"/>
</dbReference>
<dbReference type="InterPro" id="IPR044201">
    <property type="entry name" value="DVR-like"/>
</dbReference>
<dbReference type="InterPro" id="IPR016040">
    <property type="entry name" value="NAD(P)-bd_dom"/>
</dbReference>
<dbReference type="InterPro" id="IPR036291">
    <property type="entry name" value="NAD(P)-bd_dom_sf"/>
</dbReference>
<dbReference type="PANTHER" id="PTHR47378">
    <property type="entry name" value="DIVINYL CHLOROPHYLLIDE A 8-VINYL-REDUCTASE, CHLOROPLASTIC"/>
    <property type="match status" value="1"/>
</dbReference>
<dbReference type="PANTHER" id="PTHR47378:SF1">
    <property type="entry name" value="DIVINYL CHLOROPHYLLIDE A 8-VINYL-REDUCTASE, CHLOROPLASTIC"/>
    <property type="match status" value="1"/>
</dbReference>
<dbReference type="Pfam" id="PF13460">
    <property type="entry name" value="NAD_binding_10"/>
    <property type="match status" value="1"/>
</dbReference>
<dbReference type="SUPFAM" id="SSF51735">
    <property type="entry name" value="NAD(P)-binding Rossmann-fold domains"/>
    <property type="match status" value="1"/>
</dbReference>
<sequence>MATILLSSRLPTTGTATPSPTRPAPRFLSFPGTAIRRRGRGPLLASSAVSPPAPASAAQPYRALPASETTVLVTGATGYIGRYVVWELLRRGHRVLAVARSRSGIRGRNSPDDVVADLAPAQVVFSDVTDPAALLADLAPHGPVHAAVCCLASRGGGVQDSWRVDYRATLHTLQAARGLGAAHFVLLSAICVQKPLLEFQRAKLKFEEELAAEAARDPSFTYSVVRPTAFFKSLGGQVDIVKNGQPYVMFGDGKLCACKPISEEDLAAFIADCIYDQDKANKVLPIGGPGKALTPLEQGEMLFRLLGREPKFIKVPIQIMDAVIWVLDGLAKLFPGLEDAAEFGKIGRYYASESMLLLDPETGEYSDEKTPSYGKDTLEQFFQRVIREGMAGQELGEQTIF</sequence>
<keyword id="KW-0149">Chlorophyll biosynthesis</keyword>
<keyword id="KW-0150">Chloroplast</keyword>
<keyword id="KW-0521">NADP</keyword>
<keyword id="KW-0560">Oxidoreductase</keyword>
<keyword id="KW-0934">Plastid</keyword>
<keyword id="KW-1185">Reference proteome</keyword>
<keyword id="KW-0809">Transit peptide</keyword>
<organism>
    <name type="scientific">Zea mays</name>
    <name type="common">Maize</name>
    <dbReference type="NCBI Taxonomy" id="4577"/>
    <lineage>
        <taxon>Eukaryota</taxon>
        <taxon>Viridiplantae</taxon>
        <taxon>Streptophyta</taxon>
        <taxon>Embryophyta</taxon>
        <taxon>Tracheophyta</taxon>
        <taxon>Spermatophyta</taxon>
        <taxon>Magnoliopsida</taxon>
        <taxon>Liliopsida</taxon>
        <taxon>Poales</taxon>
        <taxon>Poaceae</taxon>
        <taxon>PACMAD clade</taxon>
        <taxon>Panicoideae</taxon>
        <taxon>Andropogonodae</taxon>
        <taxon>Andropogoneae</taxon>
        <taxon>Tripsacinae</taxon>
        <taxon>Zea</taxon>
    </lineage>
</organism>